<gene>
    <name type="primary">yqfB</name>
    <name type="ordered locus">SDY_3181</name>
</gene>
<name>AC4CH_SHIDS</name>
<evidence type="ECO:0000255" key="1"/>
<evidence type="ECO:0000255" key="2">
    <source>
        <dbReference type="HAMAP-Rule" id="MF_00684"/>
    </source>
</evidence>
<protein>
    <recommendedName>
        <fullName evidence="2">N(4)-acetylcytidine amidohydrolase</fullName>
        <shortName evidence="2">ac4C amidohydrolase</shortName>
        <ecNumber evidence="2">3.5.1.135</ecNumber>
    </recommendedName>
</protein>
<reference key="1">
    <citation type="journal article" date="2005" name="Nucleic Acids Res.">
        <title>Genome dynamics and diversity of Shigella species, the etiologic agents of bacillary dysentery.</title>
        <authorList>
            <person name="Yang F."/>
            <person name="Yang J."/>
            <person name="Zhang X."/>
            <person name="Chen L."/>
            <person name="Jiang Y."/>
            <person name="Yan Y."/>
            <person name="Tang X."/>
            <person name="Wang J."/>
            <person name="Xiong Z."/>
            <person name="Dong J."/>
            <person name="Xue Y."/>
            <person name="Zhu Y."/>
            <person name="Xu X."/>
            <person name="Sun L."/>
            <person name="Chen S."/>
            <person name="Nie H."/>
            <person name="Peng J."/>
            <person name="Xu J."/>
            <person name="Wang Y."/>
            <person name="Yuan Z."/>
            <person name="Wen Y."/>
            <person name="Yao Z."/>
            <person name="Shen Y."/>
            <person name="Qiang B."/>
            <person name="Hou Y."/>
            <person name="Yu J."/>
            <person name="Jin Q."/>
        </authorList>
    </citation>
    <scope>NUCLEOTIDE SEQUENCE [LARGE SCALE GENOMIC DNA]</scope>
    <source>
        <strain>Sd197</strain>
    </source>
</reference>
<feature type="chain" id="PRO_1000044961" description="N(4)-acetylcytidine amidohydrolase">
    <location>
        <begin position="1"/>
        <end position="103"/>
    </location>
</feature>
<feature type="domain" description="ASCH" evidence="1">
    <location>
        <begin position="6"/>
        <end position="101"/>
    </location>
</feature>
<feature type="active site" description="Proton acceptor" evidence="2">
    <location>
        <position position="21"/>
    </location>
</feature>
<feature type="active site" description="Nucleophile" evidence="2">
    <location>
        <position position="24"/>
    </location>
</feature>
<feature type="active site" description="Proton donor" evidence="2">
    <location>
        <position position="74"/>
    </location>
</feature>
<dbReference type="EC" id="3.5.1.135" evidence="2"/>
<dbReference type="EMBL" id="CP000034">
    <property type="protein sequence ID" value="ABB63191.1"/>
    <property type="molecule type" value="Genomic_DNA"/>
</dbReference>
<dbReference type="RefSeq" id="WP_001182957.1">
    <property type="nucleotide sequence ID" value="NC_007606.1"/>
</dbReference>
<dbReference type="RefSeq" id="YP_404682.1">
    <property type="nucleotide sequence ID" value="NC_007606.1"/>
</dbReference>
<dbReference type="SMR" id="Q32BW4"/>
<dbReference type="STRING" id="300267.SDY_3181"/>
<dbReference type="EnsemblBacteria" id="ABB63191">
    <property type="protein sequence ID" value="ABB63191"/>
    <property type="gene ID" value="SDY_3181"/>
</dbReference>
<dbReference type="GeneID" id="75173001"/>
<dbReference type="KEGG" id="sdy:SDY_3181"/>
<dbReference type="PATRIC" id="fig|300267.13.peg.3801"/>
<dbReference type="HOGENOM" id="CLU_152586_0_0_6"/>
<dbReference type="Proteomes" id="UP000002716">
    <property type="component" value="Chromosome"/>
</dbReference>
<dbReference type="GO" id="GO:0005829">
    <property type="term" value="C:cytosol"/>
    <property type="evidence" value="ECO:0007669"/>
    <property type="project" value="TreeGrafter"/>
</dbReference>
<dbReference type="GO" id="GO:0016813">
    <property type="term" value="F:hydrolase activity, acting on carbon-nitrogen (but not peptide) bonds, in linear amidines"/>
    <property type="evidence" value="ECO:0007669"/>
    <property type="project" value="UniProtKB-UniRule"/>
</dbReference>
<dbReference type="GO" id="GO:0106251">
    <property type="term" value="F:N4-acetylcytidine amidohydrolase activity"/>
    <property type="evidence" value="ECO:0007669"/>
    <property type="project" value="RHEA"/>
</dbReference>
<dbReference type="CDD" id="cd06552">
    <property type="entry name" value="ASCH_yqfb_like"/>
    <property type="match status" value="1"/>
</dbReference>
<dbReference type="FunFam" id="2.30.130.30:FF:000001">
    <property type="entry name" value="UPF0267 protein YqfB"/>
    <property type="match status" value="1"/>
</dbReference>
<dbReference type="Gene3D" id="2.30.130.30">
    <property type="entry name" value="Hypothetical protein"/>
    <property type="match status" value="1"/>
</dbReference>
<dbReference type="HAMAP" id="MF_00684">
    <property type="entry name" value="ac4C_amidohydr"/>
    <property type="match status" value="1"/>
</dbReference>
<dbReference type="InterPro" id="IPR008314">
    <property type="entry name" value="AC4CH"/>
</dbReference>
<dbReference type="InterPro" id="IPR007374">
    <property type="entry name" value="ASCH_domain"/>
</dbReference>
<dbReference type="InterPro" id="IPR015947">
    <property type="entry name" value="PUA-like_sf"/>
</dbReference>
<dbReference type="NCBIfam" id="NF003443">
    <property type="entry name" value="PRK04980.1"/>
    <property type="match status" value="1"/>
</dbReference>
<dbReference type="PANTHER" id="PTHR38088">
    <property type="entry name" value="UCP029143 FAMILY PROTEIN"/>
    <property type="match status" value="1"/>
</dbReference>
<dbReference type="PANTHER" id="PTHR38088:SF2">
    <property type="entry name" value="UCP029143 FAMILY PROTEIN"/>
    <property type="match status" value="1"/>
</dbReference>
<dbReference type="Pfam" id="PF04266">
    <property type="entry name" value="ASCH"/>
    <property type="match status" value="1"/>
</dbReference>
<dbReference type="PIRSF" id="PIRSF029143">
    <property type="entry name" value="UCP029143"/>
    <property type="match status" value="1"/>
</dbReference>
<dbReference type="SMART" id="SM01022">
    <property type="entry name" value="ASCH"/>
    <property type="match status" value="1"/>
</dbReference>
<dbReference type="SUPFAM" id="SSF88697">
    <property type="entry name" value="PUA domain-like"/>
    <property type="match status" value="1"/>
</dbReference>
<accession>Q32BW4</accession>
<comment type="function">
    <text evidence="2">Catalyzes the hydrolysis of N(4)-acetylcytidine (ac4C).</text>
</comment>
<comment type="catalytic activity">
    <reaction evidence="2">
        <text>N(4)-acetylcytidine + H2O = cytidine + acetate + H(+)</text>
        <dbReference type="Rhea" id="RHEA:62932"/>
        <dbReference type="ChEBI" id="CHEBI:15377"/>
        <dbReference type="ChEBI" id="CHEBI:15378"/>
        <dbReference type="ChEBI" id="CHEBI:17562"/>
        <dbReference type="ChEBI" id="CHEBI:30089"/>
        <dbReference type="ChEBI" id="CHEBI:70989"/>
        <dbReference type="EC" id="3.5.1.135"/>
    </reaction>
</comment>
<comment type="catalytic activity">
    <reaction evidence="2">
        <text>N(4)-acetyl-2'-deoxycytidine + H2O = 2'-deoxycytidine + acetate + H(+)</text>
        <dbReference type="Rhea" id="RHEA:62936"/>
        <dbReference type="ChEBI" id="CHEBI:15377"/>
        <dbReference type="ChEBI" id="CHEBI:15378"/>
        <dbReference type="ChEBI" id="CHEBI:15698"/>
        <dbReference type="ChEBI" id="CHEBI:30089"/>
        <dbReference type="ChEBI" id="CHEBI:146133"/>
        <dbReference type="EC" id="3.5.1.135"/>
    </reaction>
</comment>
<comment type="catalytic activity">
    <reaction evidence="2">
        <text>N(4)-acetylcytosine + H2O = cytosine + acetate + H(+)</text>
        <dbReference type="Rhea" id="RHEA:62940"/>
        <dbReference type="ChEBI" id="CHEBI:15377"/>
        <dbReference type="ChEBI" id="CHEBI:15378"/>
        <dbReference type="ChEBI" id="CHEBI:16040"/>
        <dbReference type="ChEBI" id="CHEBI:30089"/>
        <dbReference type="ChEBI" id="CHEBI:146134"/>
        <dbReference type="EC" id="3.5.1.135"/>
    </reaction>
</comment>
<comment type="similarity">
    <text evidence="2">Belongs to the N(4)-acetylcytidine amidohydrolase family.</text>
</comment>
<organism>
    <name type="scientific">Shigella dysenteriae serotype 1 (strain Sd197)</name>
    <dbReference type="NCBI Taxonomy" id="300267"/>
    <lineage>
        <taxon>Bacteria</taxon>
        <taxon>Pseudomonadati</taxon>
        <taxon>Pseudomonadota</taxon>
        <taxon>Gammaproteobacteria</taxon>
        <taxon>Enterobacterales</taxon>
        <taxon>Enterobacteriaceae</taxon>
        <taxon>Shigella</taxon>
    </lineage>
</organism>
<proteinExistence type="inferred from homology"/>
<sequence length="103" mass="11905">MQPNDITFFQRFQDDILAGRKTITIRDESESHFKTGDVLRVGRFEDDGYFCTIEVTATSTVTLDTLTEKHAEQENMTLTELKKVIADIYPGQTQFYVIEFKCL</sequence>
<keyword id="KW-0378">Hydrolase</keyword>
<keyword id="KW-1185">Reference proteome</keyword>